<sequence length="215" mass="24176">MTDTPSNTDPLQSAIAPDFSSVPTQALDALRMKFSQLTASLSKIRDEMSRAELPQWYTLQAQLTVTLSQLSSLTNTLDHYEETLDATVAYPLPSFPTTAHEGLITTLMRKKNIPEVDEWIKDAKETNGLDVDSLSDAEIKKLINKDKDITSWATKCLLDERAKHSYTGLYTTKERQTESIDDRDNLYTSSVSNVKTSRPFSVDKVLKFVNQGESY</sequence>
<reference key="1">
    <citation type="journal article" date="2004" name="Nature">
        <title>Genome evolution in yeasts.</title>
        <authorList>
            <person name="Dujon B."/>
            <person name="Sherman D."/>
            <person name="Fischer G."/>
            <person name="Durrens P."/>
            <person name="Casaregola S."/>
            <person name="Lafontaine I."/>
            <person name="de Montigny J."/>
            <person name="Marck C."/>
            <person name="Neuveglise C."/>
            <person name="Talla E."/>
            <person name="Goffard N."/>
            <person name="Frangeul L."/>
            <person name="Aigle M."/>
            <person name="Anthouard V."/>
            <person name="Babour A."/>
            <person name="Barbe V."/>
            <person name="Barnay S."/>
            <person name="Blanchin S."/>
            <person name="Beckerich J.-M."/>
            <person name="Beyne E."/>
            <person name="Bleykasten C."/>
            <person name="Boisrame A."/>
            <person name="Boyer J."/>
            <person name="Cattolico L."/>
            <person name="Confanioleri F."/>
            <person name="de Daruvar A."/>
            <person name="Despons L."/>
            <person name="Fabre E."/>
            <person name="Fairhead C."/>
            <person name="Ferry-Dumazet H."/>
            <person name="Groppi A."/>
            <person name="Hantraye F."/>
            <person name="Hennequin C."/>
            <person name="Jauniaux N."/>
            <person name="Joyet P."/>
            <person name="Kachouri R."/>
            <person name="Kerrest A."/>
            <person name="Koszul R."/>
            <person name="Lemaire M."/>
            <person name="Lesur I."/>
            <person name="Ma L."/>
            <person name="Muller H."/>
            <person name="Nicaud J.-M."/>
            <person name="Nikolski M."/>
            <person name="Oztas S."/>
            <person name="Ozier-Kalogeropoulos O."/>
            <person name="Pellenz S."/>
            <person name="Potier S."/>
            <person name="Richard G.-F."/>
            <person name="Straub M.-L."/>
            <person name="Suleau A."/>
            <person name="Swennen D."/>
            <person name="Tekaia F."/>
            <person name="Wesolowski-Louvel M."/>
            <person name="Westhof E."/>
            <person name="Wirth B."/>
            <person name="Zeniou-Meyer M."/>
            <person name="Zivanovic Y."/>
            <person name="Bolotin-Fukuhara M."/>
            <person name="Thierry A."/>
            <person name="Bouchier C."/>
            <person name="Caudron B."/>
            <person name="Scarpelli C."/>
            <person name="Gaillardin C."/>
            <person name="Weissenbach J."/>
            <person name="Wincker P."/>
            <person name="Souciet J.-L."/>
        </authorList>
    </citation>
    <scope>NUCLEOTIDE SEQUENCE [LARGE SCALE GENOMIC DNA]</scope>
    <source>
        <strain>ATCC 8585 / CBS 2359 / DSM 70799 / NBRC 1267 / NRRL Y-1140 / WM37</strain>
    </source>
</reference>
<accession>Q6CM22</accession>
<gene>
    <name type="primary">MED8</name>
    <name type="ordered locus">KLLA0E23683g</name>
</gene>
<protein>
    <recommendedName>
        <fullName>Mediator of RNA polymerase II transcription subunit 8</fullName>
    </recommendedName>
    <alternativeName>
        <fullName>Mediator complex subunit 8</fullName>
    </alternativeName>
</protein>
<evidence type="ECO:0000250" key="1"/>
<evidence type="ECO:0000255" key="2"/>
<evidence type="ECO:0000305" key="3"/>
<proteinExistence type="inferred from homology"/>
<feature type="chain" id="PRO_0000304544" description="Mediator of RNA polymerase II transcription subunit 8">
    <location>
        <begin position="1"/>
        <end position="215"/>
    </location>
</feature>
<feature type="coiled-coil region" evidence="2">
    <location>
        <begin position="27"/>
        <end position="89"/>
    </location>
</feature>
<dbReference type="EMBL" id="CR382125">
    <property type="protein sequence ID" value="CAH00104.1"/>
    <property type="status" value="ALT_INIT"/>
    <property type="molecule type" value="Genomic_DNA"/>
</dbReference>
<dbReference type="RefSeq" id="XP_455017.1">
    <property type="nucleotide sequence ID" value="XM_455017.1"/>
</dbReference>
<dbReference type="SMR" id="Q6CM22"/>
<dbReference type="FunCoup" id="Q6CM22">
    <property type="interactions" value="180"/>
</dbReference>
<dbReference type="PaxDb" id="284590-Q6CM22"/>
<dbReference type="KEGG" id="kla:KLLA0_E23607g"/>
<dbReference type="eggNOG" id="ENOG502S8U1">
    <property type="taxonomic scope" value="Eukaryota"/>
</dbReference>
<dbReference type="HOGENOM" id="CLU_108151_0_0_1"/>
<dbReference type="InParanoid" id="Q6CM22"/>
<dbReference type="Proteomes" id="UP000000598">
    <property type="component" value="Chromosome E"/>
</dbReference>
<dbReference type="GO" id="GO:0070847">
    <property type="term" value="C:core mediator complex"/>
    <property type="evidence" value="ECO:0007669"/>
    <property type="project" value="TreeGrafter"/>
</dbReference>
<dbReference type="GO" id="GO:0016592">
    <property type="term" value="C:mediator complex"/>
    <property type="evidence" value="ECO:0007669"/>
    <property type="project" value="InterPro"/>
</dbReference>
<dbReference type="GO" id="GO:0000978">
    <property type="term" value="F:RNA polymerase II cis-regulatory region sequence-specific DNA binding"/>
    <property type="evidence" value="ECO:0007669"/>
    <property type="project" value="TreeGrafter"/>
</dbReference>
<dbReference type="GO" id="GO:0003712">
    <property type="term" value="F:transcription coregulator activity"/>
    <property type="evidence" value="ECO:0007669"/>
    <property type="project" value="InterPro"/>
</dbReference>
<dbReference type="GO" id="GO:0006357">
    <property type="term" value="P:regulation of transcription by RNA polymerase II"/>
    <property type="evidence" value="ECO:0007669"/>
    <property type="project" value="InterPro"/>
</dbReference>
<dbReference type="Gene3D" id="1.20.58.1710">
    <property type="match status" value="1"/>
</dbReference>
<dbReference type="Gene3D" id="6.10.250.2610">
    <property type="match status" value="1"/>
</dbReference>
<dbReference type="InterPro" id="IPR019364">
    <property type="entry name" value="Mediatior_Med8_fun/met"/>
</dbReference>
<dbReference type="PANTHER" id="PTHR13074">
    <property type="entry name" value="MEDIATOR OF RNA POLYMERASE II TRANSCRIPTION SUBUNIT 8"/>
    <property type="match status" value="1"/>
</dbReference>
<dbReference type="PANTHER" id="PTHR13074:SF9">
    <property type="entry name" value="MEDIATOR OF RNA POLYMERASE II TRANSCRIPTION SUBUNIT 8"/>
    <property type="match status" value="1"/>
</dbReference>
<dbReference type="Pfam" id="PF10232">
    <property type="entry name" value="Med8"/>
    <property type="match status" value="1"/>
</dbReference>
<comment type="function">
    <text evidence="1">Component of the Mediator complex, a coactivator involved in the regulated transcription of nearly all RNA polymerase II-dependent genes. Mediator functions as a bridge to convey information from gene-specific regulatory proteins to the basal RNA polymerase II transcription machinery. Mediator is recruited to promoters by direct interactions with regulatory proteins and serves as a scaffold for the assembly of a functional preinitiation complex with RNA polymerase II and the general transcription factors (By similarity).</text>
</comment>
<comment type="subunit">
    <text evidence="1">Component of the Mediator complex.</text>
</comment>
<comment type="subcellular location">
    <subcellularLocation>
        <location evidence="3">Nucleus</location>
    </subcellularLocation>
</comment>
<comment type="similarity">
    <text evidence="3">Belongs to the Mediator complex subunit 8 family.</text>
</comment>
<comment type="sequence caution" evidence="3">
    <conflict type="erroneous initiation">
        <sequence resource="EMBL-CDS" id="CAH00104"/>
    </conflict>
</comment>
<organism>
    <name type="scientific">Kluyveromyces lactis (strain ATCC 8585 / CBS 2359 / DSM 70799 / NBRC 1267 / NRRL Y-1140 / WM37)</name>
    <name type="common">Yeast</name>
    <name type="synonym">Candida sphaerica</name>
    <dbReference type="NCBI Taxonomy" id="284590"/>
    <lineage>
        <taxon>Eukaryota</taxon>
        <taxon>Fungi</taxon>
        <taxon>Dikarya</taxon>
        <taxon>Ascomycota</taxon>
        <taxon>Saccharomycotina</taxon>
        <taxon>Saccharomycetes</taxon>
        <taxon>Saccharomycetales</taxon>
        <taxon>Saccharomycetaceae</taxon>
        <taxon>Kluyveromyces</taxon>
    </lineage>
</organism>
<name>MED8_KLULA</name>
<keyword id="KW-0010">Activator</keyword>
<keyword id="KW-0175">Coiled coil</keyword>
<keyword id="KW-0539">Nucleus</keyword>
<keyword id="KW-1185">Reference proteome</keyword>
<keyword id="KW-0804">Transcription</keyword>
<keyword id="KW-0805">Transcription regulation</keyword>